<protein>
    <recommendedName>
        <fullName evidence="1">ATP phosphoribosyltransferase</fullName>
        <shortName evidence="1">ATP-PRT</shortName>
        <shortName evidence="1">ATP-PRTase</shortName>
        <ecNumber evidence="1">2.4.2.17</ecNumber>
    </recommendedName>
</protein>
<reference key="1">
    <citation type="journal article" date="2007" name="Microbiology">
        <title>Comparative analysis of the Corynebacterium glutamicum group and complete genome sequence of strain R.</title>
        <authorList>
            <person name="Yukawa H."/>
            <person name="Omumasaba C.A."/>
            <person name="Nonaka H."/>
            <person name="Kos P."/>
            <person name="Okai N."/>
            <person name="Suzuki N."/>
            <person name="Suda M."/>
            <person name="Tsuge Y."/>
            <person name="Watanabe J."/>
            <person name="Ikeda Y."/>
            <person name="Vertes A.A."/>
            <person name="Inui M."/>
        </authorList>
    </citation>
    <scope>NUCLEOTIDE SEQUENCE [LARGE SCALE GENOMIC DNA]</scope>
    <source>
        <strain>R</strain>
    </source>
</reference>
<comment type="function">
    <text evidence="1">Catalyzes the condensation of ATP and 5-phosphoribose 1-diphosphate to form N'-(5'-phosphoribosyl)-ATP (PR-ATP). Has a crucial role in the pathway because the rate of histidine biosynthesis seems to be controlled primarily by regulation of HisG enzymatic activity.</text>
</comment>
<comment type="catalytic activity">
    <reaction evidence="1">
        <text>1-(5-phospho-beta-D-ribosyl)-ATP + diphosphate = 5-phospho-alpha-D-ribose 1-diphosphate + ATP</text>
        <dbReference type="Rhea" id="RHEA:18473"/>
        <dbReference type="ChEBI" id="CHEBI:30616"/>
        <dbReference type="ChEBI" id="CHEBI:33019"/>
        <dbReference type="ChEBI" id="CHEBI:58017"/>
        <dbReference type="ChEBI" id="CHEBI:73183"/>
        <dbReference type="EC" id="2.4.2.17"/>
    </reaction>
</comment>
<comment type="cofactor">
    <cofactor evidence="1">
        <name>Mg(2+)</name>
        <dbReference type="ChEBI" id="CHEBI:18420"/>
    </cofactor>
</comment>
<comment type="activity regulation">
    <text evidence="1">Feedback inhibited by histidine.</text>
</comment>
<comment type="pathway">
    <text evidence="1">Amino-acid biosynthesis; L-histidine biosynthesis; L-histidine from 5-phospho-alpha-D-ribose 1-diphosphate: step 1/9.</text>
</comment>
<comment type="subcellular location">
    <subcellularLocation>
        <location evidence="1">Cytoplasm</location>
    </subcellularLocation>
</comment>
<comment type="similarity">
    <text evidence="1">Belongs to the ATP phosphoribosyltransferase family. Long subfamily.</text>
</comment>
<dbReference type="EC" id="2.4.2.17" evidence="1"/>
<dbReference type="EMBL" id="AP009044">
    <property type="protein sequence ID" value="BAF54556.1"/>
    <property type="molecule type" value="Genomic_DNA"/>
</dbReference>
<dbReference type="RefSeq" id="WP_003856149.1">
    <property type="nucleotide sequence ID" value="NC_009342.1"/>
</dbReference>
<dbReference type="SMR" id="A4QE90"/>
<dbReference type="GeneID" id="1019477"/>
<dbReference type="KEGG" id="cgt:cgR_1564"/>
<dbReference type="HOGENOM" id="CLU_038115_1_1_11"/>
<dbReference type="PhylomeDB" id="A4QE90"/>
<dbReference type="UniPathway" id="UPA00031">
    <property type="reaction ID" value="UER00006"/>
</dbReference>
<dbReference type="Proteomes" id="UP000006698">
    <property type="component" value="Chromosome"/>
</dbReference>
<dbReference type="GO" id="GO:0005737">
    <property type="term" value="C:cytoplasm"/>
    <property type="evidence" value="ECO:0007669"/>
    <property type="project" value="UniProtKB-SubCell"/>
</dbReference>
<dbReference type="GO" id="GO:0005524">
    <property type="term" value="F:ATP binding"/>
    <property type="evidence" value="ECO:0007669"/>
    <property type="project" value="UniProtKB-KW"/>
</dbReference>
<dbReference type="GO" id="GO:0003879">
    <property type="term" value="F:ATP phosphoribosyltransferase activity"/>
    <property type="evidence" value="ECO:0007669"/>
    <property type="project" value="UniProtKB-UniRule"/>
</dbReference>
<dbReference type="GO" id="GO:0000287">
    <property type="term" value="F:magnesium ion binding"/>
    <property type="evidence" value="ECO:0007669"/>
    <property type="project" value="UniProtKB-UniRule"/>
</dbReference>
<dbReference type="GO" id="GO:0000105">
    <property type="term" value="P:L-histidine biosynthetic process"/>
    <property type="evidence" value="ECO:0007669"/>
    <property type="project" value="UniProtKB-UniRule"/>
</dbReference>
<dbReference type="Gene3D" id="3.30.70.120">
    <property type="match status" value="1"/>
</dbReference>
<dbReference type="Gene3D" id="3.40.190.10">
    <property type="entry name" value="Periplasmic binding protein-like II"/>
    <property type="match status" value="2"/>
</dbReference>
<dbReference type="HAMAP" id="MF_00079">
    <property type="entry name" value="HisG_Long"/>
    <property type="match status" value="1"/>
</dbReference>
<dbReference type="InterPro" id="IPR020621">
    <property type="entry name" value="ATP-PRT_HisG_long"/>
</dbReference>
<dbReference type="InterPro" id="IPR013820">
    <property type="entry name" value="ATP_PRibTrfase_cat"/>
</dbReference>
<dbReference type="InterPro" id="IPR018198">
    <property type="entry name" value="ATP_PRibTrfase_CS"/>
</dbReference>
<dbReference type="InterPro" id="IPR001348">
    <property type="entry name" value="ATP_PRibTrfase_HisG"/>
</dbReference>
<dbReference type="InterPro" id="IPR013115">
    <property type="entry name" value="HisG_C"/>
</dbReference>
<dbReference type="InterPro" id="IPR011322">
    <property type="entry name" value="N-reg_PII-like_a/b"/>
</dbReference>
<dbReference type="InterPro" id="IPR015867">
    <property type="entry name" value="N-reg_PII/ATP_PRibTrfase_C"/>
</dbReference>
<dbReference type="NCBIfam" id="TIGR00070">
    <property type="entry name" value="hisG"/>
    <property type="match status" value="1"/>
</dbReference>
<dbReference type="NCBIfam" id="TIGR03455">
    <property type="entry name" value="HisG_C-term"/>
    <property type="match status" value="1"/>
</dbReference>
<dbReference type="PANTHER" id="PTHR21403:SF8">
    <property type="entry name" value="ATP PHOSPHORIBOSYLTRANSFERASE"/>
    <property type="match status" value="1"/>
</dbReference>
<dbReference type="PANTHER" id="PTHR21403">
    <property type="entry name" value="ATP PHOSPHORIBOSYLTRANSFERASE ATP-PRTASE"/>
    <property type="match status" value="1"/>
</dbReference>
<dbReference type="Pfam" id="PF01634">
    <property type="entry name" value="HisG"/>
    <property type="match status" value="1"/>
</dbReference>
<dbReference type="Pfam" id="PF08029">
    <property type="entry name" value="HisG_C"/>
    <property type="match status" value="1"/>
</dbReference>
<dbReference type="SUPFAM" id="SSF54913">
    <property type="entry name" value="GlnB-like"/>
    <property type="match status" value="1"/>
</dbReference>
<dbReference type="SUPFAM" id="SSF53850">
    <property type="entry name" value="Periplasmic binding protein-like II"/>
    <property type="match status" value="1"/>
</dbReference>
<dbReference type="PROSITE" id="PS01316">
    <property type="entry name" value="ATP_P_PHORIBOSYLTR"/>
    <property type="match status" value="1"/>
</dbReference>
<feature type="chain" id="PRO_1000004454" description="ATP phosphoribosyltransferase">
    <location>
        <begin position="1"/>
        <end position="281"/>
    </location>
</feature>
<organism>
    <name type="scientific">Corynebacterium glutamicum (strain R)</name>
    <dbReference type="NCBI Taxonomy" id="340322"/>
    <lineage>
        <taxon>Bacteria</taxon>
        <taxon>Bacillati</taxon>
        <taxon>Actinomycetota</taxon>
        <taxon>Actinomycetes</taxon>
        <taxon>Mycobacteriales</taxon>
        <taxon>Corynebacteriaceae</taxon>
        <taxon>Corynebacterium</taxon>
    </lineage>
</organism>
<evidence type="ECO:0000255" key="1">
    <source>
        <dbReference type="HAMAP-Rule" id="MF_00079"/>
    </source>
</evidence>
<proteinExistence type="inferred from homology"/>
<accession>A4QE90</accession>
<sequence length="281" mass="30229">MLKIAVPNKGSLSERAMEILAEAGYAGRGDSKSLNVFDEANNVEFFFLRPKDIAIYVAGGQLDLGITGRDLARDSQADVHEVLSLGFGSSTFRYAAPADEEWSIEKLDGKRIATSYPNLVRDDLAARGLSAEVLRLDGAVEVSIKLGVADAIADVVSTGRTLRQQGLAPFGEVLCTSEAVIVGRKDEKVTPEQQILLRRIQGILHAQNFLMLDYNVDRDNLDAATAVTPGLSGPTVSPLARDNWVAVRAMVPRRSANAIMDKLAGLGAEAILASEIRIARI</sequence>
<name>HIS1_CORGB</name>
<gene>
    <name evidence="1" type="primary">hisG</name>
    <name type="ordered locus">cgR_1564</name>
</gene>
<keyword id="KW-0028">Amino-acid biosynthesis</keyword>
<keyword id="KW-0067">ATP-binding</keyword>
<keyword id="KW-0963">Cytoplasm</keyword>
<keyword id="KW-0328">Glycosyltransferase</keyword>
<keyword id="KW-0368">Histidine biosynthesis</keyword>
<keyword id="KW-0460">Magnesium</keyword>
<keyword id="KW-0479">Metal-binding</keyword>
<keyword id="KW-0547">Nucleotide-binding</keyword>
<keyword id="KW-0808">Transferase</keyword>